<comment type="function">
    <text evidence="1">Required for maturation of 30S ribosomal subunits.</text>
</comment>
<comment type="subcellular location">
    <subcellularLocation>
        <location evidence="1">Cytoplasm</location>
    </subcellularLocation>
</comment>
<comment type="similarity">
    <text evidence="1">Belongs to the RimP family.</text>
</comment>
<organism>
    <name type="scientific">Borrelia hermsii (strain HS1 / DAH)</name>
    <dbReference type="NCBI Taxonomy" id="314723"/>
    <lineage>
        <taxon>Bacteria</taxon>
        <taxon>Pseudomonadati</taxon>
        <taxon>Spirochaetota</taxon>
        <taxon>Spirochaetia</taxon>
        <taxon>Spirochaetales</taxon>
        <taxon>Borreliaceae</taxon>
        <taxon>Borrelia</taxon>
    </lineage>
</organism>
<gene>
    <name evidence="1" type="primary">rimP</name>
    <name type="ordered locus">BH0799</name>
</gene>
<protein>
    <recommendedName>
        <fullName evidence="1">Ribosome maturation factor RimP</fullName>
    </recommendedName>
</protein>
<keyword id="KW-0963">Cytoplasm</keyword>
<keyword id="KW-0690">Ribosome biogenesis</keyword>
<proteinExistence type="inferred from homology"/>
<name>RIMP_BORHD</name>
<reference key="1">
    <citation type="submission" date="2004-12" db="EMBL/GenBank/DDBJ databases">
        <title>The genome sequence of Borrelia hermsii and Borrelia turicatae: comparative analysis of two agents of endemic N. America relapsing fever.</title>
        <authorList>
            <person name="Porcella S.F."/>
            <person name="Raffel S.J."/>
            <person name="Schrumpf M.E."/>
            <person name="Montgomery B."/>
            <person name="Smith T."/>
            <person name="Schwan T.G."/>
        </authorList>
    </citation>
    <scope>NUCLEOTIDE SEQUENCE [LARGE SCALE GENOMIC DNA]</scope>
    <source>
        <strain>HS1 / DAH</strain>
    </source>
</reference>
<evidence type="ECO:0000255" key="1">
    <source>
        <dbReference type="HAMAP-Rule" id="MF_01077"/>
    </source>
</evidence>
<sequence length="143" mass="16453">MVKIVDNSEVYNLIKNVTDRLGIEIIEINTFRKRGEGRVQIVLYKGDDFGVDTLCDLHKMILLNLEAVLKYNFSLEISTPGINRKIKSDREFKIFEGKKIKLMLDNDFEEGFILKAGADSFIFKTDNKEVKVLYSDVKKAKLS</sequence>
<dbReference type="EMBL" id="CP000048">
    <property type="protein sequence ID" value="AAX17296.1"/>
    <property type="molecule type" value="Genomic_DNA"/>
</dbReference>
<dbReference type="RefSeq" id="WP_012422546.1">
    <property type="nucleotide sequence ID" value="NZ_CP073136.1"/>
</dbReference>
<dbReference type="SMR" id="B2S1E3"/>
<dbReference type="GeneID" id="71843632"/>
<dbReference type="KEGG" id="bhr:BH0799"/>
<dbReference type="HOGENOM" id="CLU_070525_4_1_12"/>
<dbReference type="Proteomes" id="UP000008834">
    <property type="component" value="Chromosome"/>
</dbReference>
<dbReference type="GO" id="GO:0005829">
    <property type="term" value="C:cytosol"/>
    <property type="evidence" value="ECO:0007669"/>
    <property type="project" value="TreeGrafter"/>
</dbReference>
<dbReference type="GO" id="GO:0000028">
    <property type="term" value="P:ribosomal small subunit assembly"/>
    <property type="evidence" value="ECO:0007669"/>
    <property type="project" value="TreeGrafter"/>
</dbReference>
<dbReference type="GO" id="GO:0006412">
    <property type="term" value="P:translation"/>
    <property type="evidence" value="ECO:0007669"/>
    <property type="project" value="TreeGrafter"/>
</dbReference>
<dbReference type="Gene3D" id="3.30.300.70">
    <property type="entry name" value="RimP-like superfamily, N-terminal"/>
    <property type="match status" value="1"/>
</dbReference>
<dbReference type="HAMAP" id="MF_01077">
    <property type="entry name" value="RimP"/>
    <property type="match status" value="1"/>
</dbReference>
<dbReference type="InterPro" id="IPR003728">
    <property type="entry name" value="Ribosome_maturation_RimP"/>
</dbReference>
<dbReference type="InterPro" id="IPR028989">
    <property type="entry name" value="RimP_N"/>
</dbReference>
<dbReference type="InterPro" id="IPR035956">
    <property type="entry name" value="RimP_N_sf"/>
</dbReference>
<dbReference type="NCBIfam" id="NF011223">
    <property type="entry name" value="PRK14630.1"/>
    <property type="match status" value="1"/>
</dbReference>
<dbReference type="PANTHER" id="PTHR33867">
    <property type="entry name" value="RIBOSOME MATURATION FACTOR RIMP"/>
    <property type="match status" value="1"/>
</dbReference>
<dbReference type="PANTHER" id="PTHR33867:SF1">
    <property type="entry name" value="RIBOSOME MATURATION FACTOR RIMP"/>
    <property type="match status" value="1"/>
</dbReference>
<dbReference type="Pfam" id="PF02576">
    <property type="entry name" value="RimP_N"/>
    <property type="match status" value="1"/>
</dbReference>
<dbReference type="SUPFAM" id="SSF75420">
    <property type="entry name" value="YhbC-like, N-terminal domain"/>
    <property type="match status" value="1"/>
</dbReference>
<accession>B2S1E3</accession>
<feature type="chain" id="PRO_1000136736" description="Ribosome maturation factor RimP">
    <location>
        <begin position="1"/>
        <end position="143"/>
    </location>
</feature>